<organismHost>
    <name type="scientific">Magallana gigas</name>
    <name type="common">Pacific oyster</name>
    <name type="synonym">Crassostrea gigas</name>
    <dbReference type="NCBI Taxonomy" id="29159"/>
</organismHost>
<organismHost>
    <name type="scientific">Pecten maximus</name>
    <name type="common">King scallop</name>
    <name type="synonym">Pilgrim's clam</name>
    <dbReference type="NCBI Taxonomy" id="6579"/>
</organismHost>
<gene>
    <name type="ORF">ORF103</name>
</gene>
<protein>
    <recommendedName>
        <fullName>Putative transmembrane protein ORF103</fullName>
    </recommendedName>
</protein>
<accession>Q6R7C6</accession>
<feature type="chain" id="PRO_0000385119" description="Putative transmembrane protein ORF103">
    <location>
        <begin position="1"/>
        <end position="423"/>
    </location>
</feature>
<feature type="transmembrane region" description="Helical" evidence="1">
    <location>
        <begin position="125"/>
        <end position="145"/>
    </location>
</feature>
<feature type="transmembrane region" description="Helical" evidence="1">
    <location>
        <begin position="162"/>
        <end position="182"/>
    </location>
</feature>
<feature type="transmembrane region" description="Helical" evidence="1">
    <location>
        <begin position="326"/>
        <end position="346"/>
    </location>
</feature>
<feature type="transmembrane region" description="Helical" evidence="1">
    <location>
        <begin position="366"/>
        <end position="386"/>
    </location>
</feature>
<feature type="region of interest" description="Disordered" evidence="2">
    <location>
        <begin position="43"/>
        <end position="91"/>
    </location>
</feature>
<feature type="region of interest" description="Disordered" evidence="2">
    <location>
        <begin position="253"/>
        <end position="282"/>
    </location>
</feature>
<feature type="compositionally biased region" description="Basic and acidic residues" evidence="2">
    <location>
        <begin position="43"/>
        <end position="57"/>
    </location>
</feature>
<feature type="compositionally biased region" description="Acidic residues" evidence="2">
    <location>
        <begin position="67"/>
        <end position="84"/>
    </location>
</feature>
<sequence length="423" mass="47593">MLRSKRTKVVYKTADVILPPVEENINSENKNEGEVKVTTFADEPKIEQEEPQQKPEVVDVYSNETDKNEEEVSIITSEDEEEDEKGMLFKRPGGKKHNYAPSKYVGEEFDLDALKEHRKMVKRWIIGISVRFGFWFALLIPVAVLLRPYTIECEPINTFSEFSLCVILFLLLQAGIDLGLAIFSYRKVGKFLESPAVDEINILMAMKPTGGVMGNPHANTEALAASVKMGNIINVHRHKLGALNKAVKKVTNDESGSEVSSEDEESDQETLLRNRKMPTNSKTRSQLFRALKDLNKRTNQYSVKPEKVLEYSEATKGKRMSAGSKLISAMTVIPLLTILFFIIVGSSTITEIKSHLVLKGHDPNDIPTLCIATYSLNWFVLIMCVLQNLIRSAPIISHALKGIDRDIKEAYMKKAAEDDEDED</sequence>
<keyword id="KW-1043">Host membrane</keyword>
<keyword id="KW-0472">Membrane</keyword>
<keyword id="KW-1185">Reference proteome</keyword>
<keyword id="KW-0812">Transmembrane</keyword>
<keyword id="KW-1133">Transmembrane helix</keyword>
<organism>
    <name type="scientific">Ostreid herpesvirus 1 (isolate France)</name>
    <name type="common">OsHV-1</name>
    <name type="synonym">Pacific oyster herpesvirus</name>
    <dbReference type="NCBI Taxonomy" id="654903"/>
    <lineage>
        <taxon>Viruses</taxon>
        <taxon>Duplodnaviria</taxon>
        <taxon>Heunggongvirae</taxon>
        <taxon>Peploviricota</taxon>
        <taxon>Herviviricetes</taxon>
        <taxon>Herpesvirales</taxon>
        <taxon>Malacoherpesviridae</taxon>
        <taxon>Ostreavirus</taxon>
        <taxon>Ostreavirus ostreidmalaco1</taxon>
        <taxon>Ostreid herpesvirus 1</taxon>
    </lineage>
</organism>
<evidence type="ECO:0000255" key="1"/>
<evidence type="ECO:0000256" key="2">
    <source>
        <dbReference type="SAM" id="MobiDB-lite"/>
    </source>
</evidence>
<evidence type="ECO:0000305" key="3"/>
<dbReference type="EMBL" id="AY509253">
    <property type="protein sequence ID" value="AAS00989.1"/>
    <property type="molecule type" value="Genomic_DNA"/>
</dbReference>
<dbReference type="RefSeq" id="YP_024642.1">
    <property type="nucleotide sequence ID" value="NC_005881.2"/>
</dbReference>
<dbReference type="KEGG" id="vg:2948261"/>
<dbReference type="Proteomes" id="UP000007021">
    <property type="component" value="Segment"/>
</dbReference>
<dbReference type="GO" id="GO:0033644">
    <property type="term" value="C:host cell membrane"/>
    <property type="evidence" value="ECO:0007669"/>
    <property type="project" value="UniProtKB-SubCell"/>
</dbReference>
<dbReference type="GO" id="GO:0016020">
    <property type="term" value="C:membrane"/>
    <property type="evidence" value="ECO:0007669"/>
    <property type="project" value="UniProtKB-KW"/>
</dbReference>
<comment type="subcellular location">
    <subcellularLocation>
        <location evidence="3">Host membrane</location>
        <topology evidence="3">Multi-pass membrane protein</topology>
    </subcellularLocation>
</comment>
<reference key="1">
    <citation type="journal article" date="2005" name="J. Gen. Virol.">
        <title>A novel class of herpesvirus with bivalve hosts.</title>
        <authorList>
            <person name="Davison A.J."/>
            <person name="Trus B.L."/>
            <person name="Cheng N."/>
            <person name="Steven A.C."/>
            <person name="Watson M.S."/>
            <person name="Cunningham C."/>
            <person name="Le Deuff R.M."/>
            <person name="Renault T."/>
        </authorList>
    </citation>
    <scope>NUCLEOTIDE SEQUENCE [LARGE SCALE GENOMIC DNA]</scope>
</reference>
<name>Y103_OSHVF</name>
<proteinExistence type="predicted"/>